<feature type="signal peptide" evidence="1">
    <location>
        <begin position="1"/>
        <end position="19"/>
    </location>
</feature>
<feature type="chain" id="PRO_0000384525" description="Uncharacterized protein ORF286a">
    <location>
        <begin position="20"/>
        <end position="286"/>
    </location>
</feature>
<evidence type="ECO:0000255" key="1"/>
<organism>
    <name type="scientific">Acidianus filamentous virus 2 (isolate Italy/Pozzuoli)</name>
    <name type="common">AFV-2</name>
    <dbReference type="NCBI Taxonomy" id="654910"/>
    <lineage>
        <taxon>Viruses</taxon>
        <taxon>Adnaviria</taxon>
        <taxon>Zilligvirae</taxon>
        <taxon>Taleaviricota</taxon>
        <taxon>Tokiviricetes</taxon>
        <taxon>Ligamenvirales</taxon>
        <taxon>Lipothrixviridae</taxon>
        <taxon>Deltalipothrixvirus</taxon>
        <taxon>Acidianus filamentous virus 2</taxon>
    </lineage>
</organism>
<protein>
    <recommendedName>
        <fullName>Uncharacterized protein ORF286a</fullName>
    </recommendedName>
</protein>
<keyword id="KW-1185">Reference proteome</keyword>
<keyword id="KW-0732">Signal</keyword>
<accession>Q573C6</accession>
<reference key="1">
    <citation type="journal article" date="2005" name="J. Bacteriol.">
        <title>Structure and genome organization of AFV2, a novel archaeal lipothrixvirus with unusual terminal and core structures.</title>
        <authorList>
            <person name="Haring M."/>
            <person name="Vestergaard G."/>
            <person name="Brugger K."/>
            <person name="Rachel R."/>
            <person name="Garrett R.A."/>
            <person name="Prangishvili D."/>
        </authorList>
    </citation>
    <scope>NUCLEOTIDE SEQUENCE [GENOMIC DNA]</scope>
</reference>
<proteinExistence type="inferred from homology"/>
<sequence>MISKEYISLLSALLTKGYSKVAVYSYSYSYSNYSSVSYITFNFPTGIMMVAKEGGIVQATSLASIQSLIESGGELSITYLATFTTSFSANEIDMYAVIGTTMLYKIASVTGSFTSSSDDNLSVEWTIDVVVGNIFNVSSGSSGVTAYSLPTGQCTSLSGQLIMYPYLVHLLIAYTLIPSTSFTVQSKYPNLPLATMLATVPTPTSPTQLQGITSFMYACGNTPVLCYPVYNDVGTAIITSSVNCTSLTIVALYQIGSTYLAYMQSPANVTLNVGNAYSYEFGVVIS</sequence>
<dbReference type="EMBL" id="AJ854042">
    <property type="protein sequence ID" value="CAH69430.1"/>
    <property type="molecule type" value="Genomic_DNA"/>
</dbReference>
<dbReference type="RefSeq" id="YP_001496968.1">
    <property type="nucleotide sequence ID" value="NC_009884.1"/>
</dbReference>
<dbReference type="KEGG" id="vg:5656076"/>
<dbReference type="Proteomes" id="UP000006364">
    <property type="component" value="Genome"/>
</dbReference>
<gene>
    <name type="ORF">ORF286a</name>
</gene>
<name>Y286A_AFV2P</name>
<organismHost>
    <name type="scientific">Acidianus sp. F28</name>
    <dbReference type="NCBI Taxonomy" id="315458"/>
</organismHost>